<reference key="1">
    <citation type="submission" date="2004-11" db="EMBL/GenBank/DDBJ databases">
        <authorList>
            <consortium name="The German cDNA consortium"/>
        </authorList>
    </citation>
    <scope>NUCLEOTIDE SEQUENCE [LARGE SCALE MRNA]</scope>
    <source>
        <tissue>Kidney</tissue>
    </source>
</reference>
<feature type="chain" id="PRO_0000081533" description="Cleavage stimulation factor subunit 2">
    <location>
        <begin position="1"/>
        <end position="577"/>
    </location>
</feature>
<feature type="domain" description="RRM" evidence="3">
    <location>
        <begin position="16"/>
        <end position="94"/>
    </location>
</feature>
<feature type="repeat" description="1; approximate">
    <location>
        <begin position="410"/>
        <end position="414"/>
    </location>
</feature>
<feature type="repeat" description="2">
    <location>
        <begin position="415"/>
        <end position="419"/>
    </location>
</feature>
<feature type="repeat" description="3">
    <location>
        <begin position="420"/>
        <end position="424"/>
    </location>
</feature>
<feature type="repeat" description="4; approximate">
    <location>
        <begin position="425"/>
        <end position="429"/>
    </location>
</feature>
<feature type="repeat" description="5; approximate">
    <location>
        <begin position="430"/>
        <end position="434"/>
    </location>
</feature>
<feature type="repeat" description="6">
    <location>
        <begin position="435"/>
        <end position="439"/>
    </location>
</feature>
<feature type="repeat" description="7">
    <location>
        <begin position="440"/>
        <end position="444"/>
    </location>
</feature>
<feature type="repeat" description="8">
    <location>
        <begin position="445"/>
        <end position="449"/>
    </location>
</feature>
<feature type="repeat" description="9">
    <location>
        <begin position="450"/>
        <end position="454"/>
    </location>
</feature>
<feature type="repeat" description="10; approximate">
    <location>
        <begin position="455"/>
        <end position="459"/>
    </location>
</feature>
<feature type="repeat" description="11">
    <location>
        <begin position="460"/>
        <end position="464"/>
    </location>
</feature>
<feature type="repeat" description="12; approximate">
    <location>
        <begin position="465"/>
        <end position="469"/>
    </location>
</feature>
<feature type="region of interest" description="Interactions with CSTF3 and SYMPK" evidence="1">
    <location>
        <begin position="108"/>
        <end position="248"/>
    </location>
</feature>
<feature type="region of interest" description="Disordered" evidence="4">
    <location>
        <begin position="207"/>
        <end position="230"/>
    </location>
</feature>
<feature type="region of interest" description="Disordered" evidence="4">
    <location>
        <begin position="319"/>
        <end position="409"/>
    </location>
</feature>
<feature type="region of interest" description="12 X 5 AA tandem repeats of M-E-A-R-[AG]">
    <location>
        <begin position="410"/>
        <end position="469"/>
    </location>
</feature>
<feature type="region of interest" description="Disordered" evidence="4">
    <location>
        <begin position="509"/>
        <end position="532"/>
    </location>
</feature>
<feature type="region of interest" description="Interaction with RPO2TC1" evidence="1">
    <location>
        <begin position="514"/>
        <end position="577"/>
    </location>
</feature>
<feature type="compositionally biased region" description="Basic and acidic residues" evidence="4">
    <location>
        <begin position="360"/>
        <end position="373"/>
    </location>
</feature>
<feature type="modified residue" description="Phosphoserine" evidence="2">
    <location>
        <position position="14"/>
    </location>
</feature>
<feature type="modified residue" description="Omega-N-methylarginine" evidence="2">
    <location>
        <position position="308"/>
    </location>
</feature>
<feature type="modified residue" description="Omega-N-methylarginine" evidence="2">
    <location>
        <position position="468"/>
    </location>
</feature>
<feature type="modified residue" description="Omega-N-methylarginine" evidence="2">
    <location>
        <position position="475"/>
    </location>
</feature>
<feature type="modified residue" description="Phosphoserine" evidence="2">
    <location>
        <position position="518"/>
    </location>
</feature>
<feature type="modified residue" description="Phosphoserine" evidence="2">
    <location>
        <position position="524"/>
    </location>
</feature>
<feature type="cross-link" description="Glycyl lysine isopeptide (Lys-Gly) (interchain with G-Cter in SUMO2)" evidence="2">
    <location>
        <position position="189"/>
    </location>
</feature>
<organism>
    <name type="scientific">Pongo abelii</name>
    <name type="common">Sumatran orangutan</name>
    <name type="synonym">Pongo pygmaeus abelii</name>
    <dbReference type="NCBI Taxonomy" id="9601"/>
    <lineage>
        <taxon>Eukaryota</taxon>
        <taxon>Metazoa</taxon>
        <taxon>Chordata</taxon>
        <taxon>Craniata</taxon>
        <taxon>Vertebrata</taxon>
        <taxon>Euteleostomi</taxon>
        <taxon>Mammalia</taxon>
        <taxon>Eutheria</taxon>
        <taxon>Euarchontoglires</taxon>
        <taxon>Primates</taxon>
        <taxon>Haplorrhini</taxon>
        <taxon>Catarrhini</taxon>
        <taxon>Hominidae</taxon>
        <taxon>Pongo</taxon>
    </lineage>
</organism>
<keyword id="KW-1017">Isopeptide bond</keyword>
<keyword id="KW-0488">Methylation</keyword>
<keyword id="KW-0507">mRNA processing</keyword>
<keyword id="KW-0539">Nucleus</keyword>
<keyword id="KW-0597">Phosphoprotein</keyword>
<keyword id="KW-1185">Reference proteome</keyword>
<keyword id="KW-0677">Repeat</keyword>
<keyword id="KW-0694">RNA-binding</keyword>
<keyword id="KW-0832">Ubl conjugation</keyword>
<sequence>MAGLTVRDPAVDRSLRSVFVGNIPYEATEEQLKDIFSEVGPVVSFRLVYDRETGKPKGYGFCEYQDQETALSAMRNLNGREFSGRALRVDNAASEKNKEELKSLGTGAPVIESPYGETISPEDAPESISKAVASLPPEQMFELMKQMKLCVQNSPQEARNMLLQNPQLAYALLQAQVVMRIVDPEIALKILHRQTNIPTLIAGNPQPVHGAGPGSGSNVSMNQQNPQAPQAQSLGGMHVNGAPPLMQASMQGGVPAPGQIPAAVTGPGPGSLAPGGGMQAQVGMPGSGPVSMERGQVPMQDPRAAMQRGSLPANVPTPRGLLGDAPNDPRGGTLLSVTGEVEPRGYLGPPHQGPPMHHVPGHESRGPPPHELRGGPLPEPRPLMAEPRGPMLDQRGPPLDGRGGRDPRGIDARGMEARAMEARGLDARGLEARAMEARAMEARAMEARAMEARAMEVRGMEARGMDTRGPVPGPRGPIPSGMQGPSPINMGAVVPQGSRQVPVMQGTGLQGASIQGGSQPGGFSPGQNQVTPQDHEKAALIMQVLQLTADQIAMLPPEQRQSILILKEQIQKSTGAP</sequence>
<protein>
    <recommendedName>
        <fullName>Cleavage stimulation factor subunit 2</fullName>
    </recommendedName>
    <alternativeName>
        <fullName>CF-1 64 kDa subunit</fullName>
    </alternativeName>
    <alternativeName>
        <fullName>Cleavage stimulation factor 64 kDa subunit</fullName>
        <shortName>CSTF 64 kDa subunit</shortName>
        <shortName>CstF-64</shortName>
    </alternativeName>
</protein>
<comment type="function">
    <text evidence="2">One of the multiple factors required for polyadenylation and 3'-end cleavage of mammalian pre-mRNAs. This subunit is directly involved in the binding to pre-mRNAs (By similarity).</text>
</comment>
<comment type="subunit">
    <text evidence="1">The CSTF complex is composed of CSTF1 (50 kDa subunit), CSTF2 (64 kDa subunit) and CSTF3 (77 kDa subunit). CSTF2 directly interacts with CSTF3, SYMPK and RPO2TC1. Interacts with HSF1 in heat-stressed cells (By similarity). Interacts with CPSF2, CPSF3 and FIP1L1. Interacts with DDX1 (By similarity).</text>
</comment>
<comment type="subcellular location">
    <subcellularLocation>
        <location evidence="2">Nucleus</location>
    </subcellularLocation>
    <text evidence="2">Localized with DDX1 in cleavage bodies.</text>
</comment>
<dbReference type="EMBL" id="CR858012">
    <property type="protein sequence ID" value="CAH90254.1"/>
    <property type="molecule type" value="mRNA"/>
</dbReference>
<dbReference type="RefSeq" id="NP_001125111.1">
    <property type="nucleotide sequence ID" value="NM_001131639.2"/>
</dbReference>
<dbReference type="BMRB" id="Q5RDA3"/>
<dbReference type="SMR" id="Q5RDA3"/>
<dbReference type="FunCoup" id="Q5RDA3">
    <property type="interactions" value="3003"/>
</dbReference>
<dbReference type="STRING" id="9601.ENSPPYP00000022995"/>
<dbReference type="GeneID" id="100171993"/>
<dbReference type="KEGG" id="pon:100171993"/>
<dbReference type="CTD" id="1478"/>
<dbReference type="eggNOG" id="KOG0108">
    <property type="taxonomic scope" value="Eukaryota"/>
</dbReference>
<dbReference type="InParanoid" id="Q5RDA3"/>
<dbReference type="OrthoDB" id="272703at2759"/>
<dbReference type="Proteomes" id="UP000001595">
    <property type="component" value="Unplaced"/>
</dbReference>
<dbReference type="GO" id="GO:0071920">
    <property type="term" value="C:cleavage body"/>
    <property type="evidence" value="ECO:0000250"/>
    <property type="project" value="UniProtKB"/>
</dbReference>
<dbReference type="GO" id="GO:0005847">
    <property type="term" value="C:mRNA cleavage and polyadenylation specificity factor complex"/>
    <property type="evidence" value="ECO:0000250"/>
    <property type="project" value="UniProtKB"/>
</dbReference>
<dbReference type="GO" id="GO:0005634">
    <property type="term" value="C:nucleus"/>
    <property type="evidence" value="ECO:0000250"/>
    <property type="project" value="UniProtKB"/>
</dbReference>
<dbReference type="GO" id="GO:0003729">
    <property type="term" value="F:mRNA binding"/>
    <property type="evidence" value="ECO:0007669"/>
    <property type="project" value="TreeGrafter"/>
</dbReference>
<dbReference type="GO" id="GO:0031124">
    <property type="term" value="P:mRNA 3'-end processing"/>
    <property type="evidence" value="ECO:0000250"/>
    <property type="project" value="UniProtKB"/>
</dbReference>
<dbReference type="CDD" id="cd12671">
    <property type="entry name" value="RRM_CSTF2_CSTF2T"/>
    <property type="match status" value="1"/>
</dbReference>
<dbReference type="FunFam" id="1.10.20.70:FF:000001">
    <property type="entry name" value="Cleavage stimulation factor subunit 2"/>
    <property type="match status" value="1"/>
</dbReference>
<dbReference type="FunFam" id="1.25.40.630:FF:000001">
    <property type="entry name" value="Cleavage stimulation factor subunit 2"/>
    <property type="match status" value="1"/>
</dbReference>
<dbReference type="FunFam" id="3.30.70.330:FF:000061">
    <property type="entry name" value="cleavage stimulation factor subunit 2 isoform X1"/>
    <property type="match status" value="1"/>
</dbReference>
<dbReference type="Gene3D" id="1.25.40.630">
    <property type="match status" value="1"/>
</dbReference>
<dbReference type="Gene3D" id="3.30.70.330">
    <property type="match status" value="1"/>
</dbReference>
<dbReference type="Gene3D" id="1.10.20.70">
    <property type="entry name" value="Transcription termination and cleavage factor, C-terminal domain"/>
    <property type="match status" value="1"/>
</dbReference>
<dbReference type="InterPro" id="IPR025742">
    <property type="entry name" value="CSTF2_hinge"/>
</dbReference>
<dbReference type="InterPro" id="IPR026896">
    <property type="entry name" value="CSTF_C"/>
</dbReference>
<dbReference type="InterPro" id="IPR038192">
    <property type="entry name" value="CSTF_C_sf"/>
</dbReference>
<dbReference type="InterPro" id="IPR012677">
    <property type="entry name" value="Nucleotide-bd_a/b_plait_sf"/>
</dbReference>
<dbReference type="InterPro" id="IPR035979">
    <property type="entry name" value="RBD_domain_sf"/>
</dbReference>
<dbReference type="InterPro" id="IPR000504">
    <property type="entry name" value="RRM_dom"/>
</dbReference>
<dbReference type="PANTHER" id="PTHR45735">
    <property type="entry name" value="CLEAVAGE STIMULATION FACTOR SUBUNIT 2"/>
    <property type="match status" value="1"/>
</dbReference>
<dbReference type="PANTHER" id="PTHR45735:SF6">
    <property type="entry name" value="CLEAVAGE STIMULATION FACTOR SUBUNIT 2"/>
    <property type="match status" value="1"/>
</dbReference>
<dbReference type="Pfam" id="PF14327">
    <property type="entry name" value="CSTF2_hinge"/>
    <property type="match status" value="1"/>
</dbReference>
<dbReference type="Pfam" id="PF14304">
    <property type="entry name" value="CSTF_C"/>
    <property type="match status" value="1"/>
</dbReference>
<dbReference type="Pfam" id="PF00076">
    <property type="entry name" value="RRM_1"/>
    <property type="match status" value="1"/>
</dbReference>
<dbReference type="SMART" id="SM00360">
    <property type="entry name" value="RRM"/>
    <property type="match status" value="1"/>
</dbReference>
<dbReference type="SUPFAM" id="SSF54928">
    <property type="entry name" value="RNA-binding domain, RBD"/>
    <property type="match status" value="1"/>
</dbReference>
<dbReference type="PROSITE" id="PS50102">
    <property type="entry name" value="RRM"/>
    <property type="match status" value="1"/>
</dbReference>
<name>CSTF2_PONAB</name>
<gene>
    <name type="primary">CSTF2</name>
</gene>
<accession>Q5RDA3</accession>
<proteinExistence type="evidence at transcript level"/>
<evidence type="ECO:0000250" key="1"/>
<evidence type="ECO:0000250" key="2">
    <source>
        <dbReference type="UniProtKB" id="P33240"/>
    </source>
</evidence>
<evidence type="ECO:0000255" key="3">
    <source>
        <dbReference type="PROSITE-ProRule" id="PRU00176"/>
    </source>
</evidence>
<evidence type="ECO:0000256" key="4">
    <source>
        <dbReference type="SAM" id="MobiDB-lite"/>
    </source>
</evidence>